<evidence type="ECO:0000255" key="1">
    <source>
        <dbReference type="HAMAP-Rule" id="MF_01217"/>
    </source>
</evidence>
<evidence type="ECO:0000255" key="2">
    <source>
        <dbReference type="PROSITE-ProRule" id="PRU00258"/>
    </source>
</evidence>
<sequence>MSSSIFDKVQNIVANQLGVEKDKVTEDAKFAALGADSLDTVELVMAIEDAFSIDIPDEDAEKIANLSQAIEFIQHAIDKKKD</sequence>
<organism>
    <name type="scientific">Gracilaria tenuistipitata var. liui</name>
    <name type="common">Red alga</name>
    <dbReference type="NCBI Taxonomy" id="285951"/>
    <lineage>
        <taxon>Eukaryota</taxon>
        <taxon>Rhodophyta</taxon>
        <taxon>Florideophyceae</taxon>
        <taxon>Rhodymeniophycidae</taxon>
        <taxon>Gracilariales</taxon>
        <taxon>Gracilariaceae</taxon>
        <taxon>Gracilaria</taxon>
        <taxon>Gracilaria tenuistipitata</taxon>
    </lineage>
</organism>
<proteinExistence type="inferred from homology"/>
<feature type="chain" id="PRO_0000180232" description="Acyl carrier protein">
    <location>
        <begin position="1"/>
        <end position="82"/>
    </location>
</feature>
<feature type="domain" description="Carrier" evidence="2">
    <location>
        <begin position="3"/>
        <end position="77"/>
    </location>
</feature>
<feature type="modified residue" description="O-(pantetheine 4'-phosphoryl)serine" evidence="2">
    <location>
        <position position="37"/>
    </location>
</feature>
<gene>
    <name evidence="1" type="primary">acpP</name>
    <name type="ordered locus">Grc000111</name>
</gene>
<name>ACP_GRATL</name>
<protein>
    <recommendedName>
        <fullName evidence="1">Acyl carrier protein</fullName>
        <shortName evidence="1">ACP</shortName>
    </recommendedName>
</protein>
<accession>Q6B8U3</accession>
<keyword id="KW-0150">Chloroplast</keyword>
<keyword id="KW-0275">Fatty acid biosynthesis</keyword>
<keyword id="KW-0276">Fatty acid metabolism</keyword>
<keyword id="KW-0444">Lipid biosynthesis</keyword>
<keyword id="KW-0443">Lipid metabolism</keyword>
<keyword id="KW-0596">Phosphopantetheine</keyword>
<keyword id="KW-0597">Phosphoprotein</keyword>
<keyword id="KW-0934">Plastid</keyword>
<comment type="function">
    <text evidence="1">Carrier of the growing fatty acid chain in fatty acid biosynthesis.</text>
</comment>
<comment type="pathway">
    <text evidence="1">Lipid metabolism; fatty acid biosynthesis.</text>
</comment>
<comment type="subcellular location">
    <subcellularLocation>
        <location>Plastid</location>
        <location>Chloroplast</location>
    </subcellularLocation>
</comment>
<comment type="PTM">
    <text evidence="1">4'-phosphopantetheine is transferred from CoA to a specific serine of apo-ACP by AcpS. This modification is essential for activity because fatty acids are bound in thioester linkage to the sulfhydryl of the prosthetic group.</text>
</comment>
<comment type="similarity">
    <text evidence="1">Belongs to the acyl carrier protein (ACP) family.</text>
</comment>
<reference key="1">
    <citation type="journal article" date="2004" name="J. Mol. Evol.">
        <title>Comparative analysis of the complete plastid genome sequence of the red alga Gracilaria tenuistipitata var. liui provides insights into the evolution of rhodoplasts and their relationship to other plastids.</title>
        <authorList>
            <person name="Hagopian J.C."/>
            <person name="Reis M."/>
            <person name="Kitajima J.P."/>
            <person name="Bhattacharya D."/>
            <person name="de Oliveira M.C."/>
        </authorList>
    </citation>
    <scope>NUCLEOTIDE SEQUENCE [LARGE SCALE GENOMIC DNA]</scope>
</reference>
<geneLocation type="chloroplast"/>
<dbReference type="EMBL" id="AY673996">
    <property type="protein sequence ID" value="AAT79692.1"/>
    <property type="molecule type" value="Genomic_DNA"/>
</dbReference>
<dbReference type="RefSeq" id="YP_063617.1">
    <property type="nucleotide sequence ID" value="NC_006137.1"/>
</dbReference>
<dbReference type="SMR" id="Q6B8U3"/>
<dbReference type="GeneID" id="2944016"/>
<dbReference type="UniPathway" id="UPA00094"/>
<dbReference type="GO" id="GO:0009507">
    <property type="term" value="C:chloroplast"/>
    <property type="evidence" value="ECO:0007669"/>
    <property type="project" value="UniProtKB-SubCell"/>
</dbReference>
<dbReference type="GO" id="GO:0005829">
    <property type="term" value="C:cytosol"/>
    <property type="evidence" value="ECO:0007669"/>
    <property type="project" value="TreeGrafter"/>
</dbReference>
<dbReference type="GO" id="GO:0016020">
    <property type="term" value="C:membrane"/>
    <property type="evidence" value="ECO:0007669"/>
    <property type="project" value="GOC"/>
</dbReference>
<dbReference type="GO" id="GO:0000035">
    <property type="term" value="F:acyl binding"/>
    <property type="evidence" value="ECO:0007669"/>
    <property type="project" value="TreeGrafter"/>
</dbReference>
<dbReference type="GO" id="GO:0000036">
    <property type="term" value="F:acyl carrier activity"/>
    <property type="evidence" value="ECO:0007669"/>
    <property type="project" value="UniProtKB-UniRule"/>
</dbReference>
<dbReference type="GO" id="GO:0031177">
    <property type="term" value="F:phosphopantetheine binding"/>
    <property type="evidence" value="ECO:0007669"/>
    <property type="project" value="InterPro"/>
</dbReference>
<dbReference type="GO" id="GO:0009245">
    <property type="term" value="P:lipid A biosynthetic process"/>
    <property type="evidence" value="ECO:0007669"/>
    <property type="project" value="TreeGrafter"/>
</dbReference>
<dbReference type="Gene3D" id="1.10.1200.10">
    <property type="entry name" value="ACP-like"/>
    <property type="match status" value="1"/>
</dbReference>
<dbReference type="HAMAP" id="MF_01217">
    <property type="entry name" value="Acyl_carrier"/>
    <property type="match status" value="1"/>
</dbReference>
<dbReference type="InterPro" id="IPR003231">
    <property type="entry name" value="ACP"/>
</dbReference>
<dbReference type="InterPro" id="IPR036736">
    <property type="entry name" value="ACP-like_sf"/>
</dbReference>
<dbReference type="InterPro" id="IPR020806">
    <property type="entry name" value="PKS_PP-bd"/>
</dbReference>
<dbReference type="InterPro" id="IPR009081">
    <property type="entry name" value="PP-bd_ACP"/>
</dbReference>
<dbReference type="InterPro" id="IPR006162">
    <property type="entry name" value="Ppantetheine_attach_site"/>
</dbReference>
<dbReference type="NCBIfam" id="TIGR00517">
    <property type="entry name" value="acyl_carrier"/>
    <property type="match status" value="1"/>
</dbReference>
<dbReference type="NCBIfam" id="NF002148">
    <property type="entry name" value="PRK00982.1-2"/>
    <property type="match status" value="1"/>
</dbReference>
<dbReference type="NCBIfam" id="NF002150">
    <property type="entry name" value="PRK00982.1-4"/>
    <property type="match status" value="1"/>
</dbReference>
<dbReference type="NCBIfam" id="NF002151">
    <property type="entry name" value="PRK00982.1-5"/>
    <property type="match status" value="1"/>
</dbReference>
<dbReference type="PANTHER" id="PTHR20863">
    <property type="entry name" value="ACYL CARRIER PROTEIN"/>
    <property type="match status" value="1"/>
</dbReference>
<dbReference type="PANTHER" id="PTHR20863:SF76">
    <property type="entry name" value="CARRIER DOMAIN-CONTAINING PROTEIN"/>
    <property type="match status" value="1"/>
</dbReference>
<dbReference type="Pfam" id="PF00550">
    <property type="entry name" value="PP-binding"/>
    <property type="match status" value="1"/>
</dbReference>
<dbReference type="SMART" id="SM00823">
    <property type="entry name" value="PKS_PP"/>
    <property type="match status" value="1"/>
</dbReference>
<dbReference type="SUPFAM" id="SSF47336">
    <property type="entry name" value="ACP-like"/>
    <property type="match status" value="1"/>
</dbReference>
<dbReference type="PROSITE" id="PS50075">
    <property type="entry name" value="CARRIER"/>
    <property type="match status" value="1"/>
</dbReference>
<dbReference type="PROSITE" id="PS00012">
    <property type="entry name" value="PHOSPHOPANTETHEINE"/>
    <property type="match status" value="1"/>
</dbReference>